<organism>
    <name type="scientific">Mycobacterium bovis (strain ATCC BAA-935 / AF2122/97)</name>
    <dbReference type="NCBI Taxonomy" id="233413"/>
    <lineage>
        <taxon>Bacteria</taxon>
        <taxon>Bacillati</taxon>
        <taxon>Actinomycetota</taxon>
        <taxon>Actinomycetes</taxon>
        <taxon>Mycobacteriales</taxon>
        <taxon>Mycobacteriaceae</taxon>
        <taxon>Mycobacterium</taxon>
        <taxon>Mycobacterium tuberculosis complex</taxon>
    </lineage>
</organism>
<evidence type="ECO:0000250" key="1">
    <source>
        <dbReference type="UniProtKB" id="P0A1P6"/>
    </source>
</evidence>
<evidence type="ECO:0000250" key="2">
    <source>
        <dbReference type="UniProtKB" id="P12425"/>
    </source>
</evidence>
<evidence type="ECO:0000250" key="3">
    <source>
        <dbReference type="UniProtKB" id="P77961"/>
    </source>
</evidence>
<evidence type="ECO:0000250" key="4">
    <source>
        <dbReference type="UniProtKB" id="P9WN39"/>
    </source>
</evidence>
<evidence type="ECO:0000255" key="5">
    <source>
        <dbReference type="PROSITE-ProRule" id="PRU01330"/>
    </source>
</evidence>
<evidence type="ECO:0000255" key="6">
    <source>
        <dbReference type="PROSITE-ProRule" id="PRU01331"/>
    </source>
</evidence>
<evidence type="ECO:0000269" key="7">
    <source>
    </source>
</evidence>
<evidence type="ECO:0000269" key="8">
    <source>
    </source>
</evidence>
<evidence type="ECO:0000303" key="9">
    <source>
    </source>
</evidence>
<evidence type="ECO:0000305" key="10"/>
<evidence type="ECO:0000305" key="11">
    <source>
    </source>
</evidence>
<dbReference type="EC" id="6.3.1.2" evidence="11"/>
<dbReference type="EMBL" id="AF458290">
    <property type="protein sequence ID" value="AAL58468.1"/>
    <property type="molecule type" value="Genomic_DNA"/>
</dbReference>
<dbReference type="EMBL" id="LT708304">
    <property type="protein sequence ID" value="SIU00852.1"/>
    <property type="molecule type" value="Genomic_DNA"/>
</dbReference>
<dbReference type="RefSeq" id="NP_855893.1">
    <property type="nucleotide sequence ID" value="NC_002945.3"/>
</dbReference>
<dbReference type="RefSeq" id="WP_003411475.1">
    <property type="nucleotide sequence ID" value="NC_002945.4"/>
</dbReference>
<dbReference type="SMR" id="P0A591"/>
<dbReference type="GeneID" id="45426197"/>
<dbReference type="KEGG" id="mbo:BQ2027_MB2244"/>
<dbReference type="PATRIC" id="fig|233413.5.peg.2460"/>
<dbReference type="BRENDA" id="6.3.1.2">
    <property type="organism ID" value="3494"/>
</dbReference>
<dbReference type="Proteomes" id="UP000001419">
    <property type="component" value="Chromosome"/>
</dbReference>
<dbReference type="GO" id="GO:0005737">
    <property type="term" value="C:cytoplasm"/>
    <property type="evidence" value="ECO:0007669"/>
    <property type="project" value="UniProtKB-SubCell"/>
</dbReference>
<dbReference type="GO" id="GO:0016020">
    <property type="term" value="C:membrane"/>
    <property type="evidence" value="ECO:0007669"/>
    <property type="project" value="TreeGrafter"/>
</dbReference>
<dbReference type="GO" id="GO:0005524">
    <property type="term" value="F:ATP binding"/>
    <property type="evidence" value="ECO:0007669"/>
    <property type="project" value="UniProtKB-KW"/>
</dbReference>
<dbReference type="GO" id="GO:0004356">
    <property type="term" value="F:glutamine synthetase activity"/>
    <property type="evidence" value="ECO:0007669"/>
    <property type="project" value="UniProtKB-EC"/>
</dbReference>
<dbReference type="GO" id="GO:0046872">
    <property type="term" value="F:metal ion binding"/>
    <property type="evidence" value="ECO:0007669"/>
    <property type="project" value="UniProtKB-KW"/>
</dbReference>
<dbReference type="GO" id="GO:0006542">
    <property type="term" value="P:glutamine biosynthetic process"/>
    <property type="evidence" value="ECO:0007669"/>
    <property type="project" value="InterPro"/>
</dbReference>
<dbReference type="GO" id="GO:0019740">
    <property type="term" value="P:nitrogen utilization"/>
    <property type="evidence" value="ECO:0007669"/>
    <property type="project" value="TreeGrafter"/>
</dbReference>
<dbReference type="FunFam" id="3.10.20.70:FF:000006">
    <property type="entry name" value="Glutamine synthetase"/>
    <property type="match status" value="1"/>
</dbReference>
<dbReference type="FunFam" id="3.30.590.10:FF:000001">
    <property type="entry name" value="Glutamine synthetase"/>
    <property type="match status" value="1"/>
</dbReference>
<dbReference type="Gene3D" id="3.10.20.70">
    <property type="entry name" value="Glutamine synthetase, N-terminal domain"/>
    <property type="match status" value="1"/>
</dbReference>
<dbReference type="Gene3D" id="3.30.590.10">
    <property type="entry name" value="Glutamine synthetase/guanido kinase, catalytic domain"/>
    <property type="match status" value="1"/>
</dbReference>
<dbReference type="InterPro" id="IPR008147">
    <property type="entry name" value="Gln_synt_N"/>
</dbReference>
<dbReference type="InterPro" id="IPR036651">
    <property type="entry name" value="Gln_synt_N_sf"/>
</dbReference>
<dbReference type="InterPro" id="IPR014746">
    <property type="entry name" value="Gln_synth/guanido_kin_cat_dom"/>
</dbReference>
<dbReference type="InterPro" id="IPR008146">
    <property type="entry name" value="Gln_synth_cat_dom"/>
</dbReference>
<dbReference type="InterPro" id="IPR027303">
    <property type="entry name" value="Gln_synth_gly_rich_site"/>
</dbReference>
<dbReference type="InterPro" id="IPR004809">
    <property type="entry name" value="Gln_synth_I"/>
</dbReference>
<dbReference type="InterPro" id="IPR001637">
    <property type="entry name" value="Gln_synth_I_adenylation_site"/>
</dbReference>
<dbReference type="InterPro" id="IPR027302">
    <property type="entry name" value="Gln_synth_N_conserv_site"/>
</dbReference>
<dbReference type="NCBIfam" id="TIGR00653">
    <property type="entry name" value="GlnA"/>
    <property type="match status" value="1"/>
</dbReference>
<dbReference type="PANTHER" id="PTHR43407">
    <property type="entry name" value="GLUTAMINE SYNTHETASE"/>
    <property type="match status" value="1"/>
</dbReference>
<dbReference type="PANTHER" id="PTHR43407:SF1">
    <property type="entry name" value="LENGSIN"/>
    <property type="match status" value="1"/>
</dbReference>
<dbReference type="Pfam" id="PF00120">
    <property type="entry name" value="Gln-synt_C"/>
    <property type="match status" value="1"/>
</dbReference>
<dbReference type="Pfam" id="PF03951">
    <property type="entry name" value="Gln-synt_N"/>
    <property type="match status" value="1"/>
</dbReference>
<dbReference type="SMART" id="SM01230">
    <property type="entry name" value="Gln-synt_C"/>
    <property type="match status" value="1"/>
</dbReference>
<dbReference type="SUPFAM" id="SSF54368">
    <property type="entry name" value="Glutamine synthetase, N-terminal domain"/>
    <property type="match status" value="1"/>
</dbReference>
<dbReference type="SUPFAM" id="SSF55931">
    <property type="entry name" value="Glutamine synthetase/guanido kinase"/>
    <property type="match status" value="1"/>
</dbReference>
<dbReference type="PROSITE" id="PS00180">
    <property type="entry name" value="GLNA_1"/>
    <property type="match status" value="1"/>
</dbReference>
<dbReference type="PROSITE" id="PS00182">
    <property type="entry name" value="GLNA_ADENYLATION"/>
    <property type="match status" value="1"/>
</dbReference>
<dbReference type="PROSITE" id="PS00181">
    <property type="entry name" value="GLNA_ATP"/>
    <property type="match status" value="1"/>
</dbReference>
<dbReference type="PROSITE" id="PS51986">
    <property type="entry name" value="GS_BETA_GRASP"/>
    <property type="match status" value="1"/>
</dbReference>
<dbReference type="PROSITE" id="PS51987">
    <property type="entry name" value="GS_CATALYTIC"/>
    <property type="match status" value="1"/>
</dbReference>
<proteinExistence type="evidence at protein level"/>
<reference key="1">
    <citation type="submission" date="2001-12" db="EMBL/GenBank/DDBJ databases">
        <title>Glutamine synthetase structural gene (glnA) Mycobacterium bovis BCG.</title>
        <authorList>
            <person name="Suh C.-I."/>
            <person name="Sung H.-C."/>
        </authorList>
    </citation>
    <scope>NUCLEOTIDE SEQUENCE [GENOMIC DNA]</scope>
    <source>
        <strain>BCG</strain>
    </source>
</reference>
<reference key="2">
    <citation type="journal article" date="2003" name="Proc. Natl. Acad. Sci. U.S.A.">
        <title>The complete genome sequence of Mycobacterium bovis.</title>
        <authorList>
            <person name="Garnier T."/>
            <person name="Eiglmeier K."/>
            <person name="Camus J.-C."/>
            <person name="Medina N."/>
            <person name="Mansoor H."/>
            <person name="Pryor M."/>
            <person name="Duthoy S."/>
            <person name="Grondin S."/>
            <person name="Lacroix C."/>
            <person name="Monsempe C."/>
            <person name="Simon S."/>
            <person name="Harris B."/>
            <person name="Atkin R."/>
            <person name="Doggett J."/>
            <person name="Mayes R."/>
            <person name="Keating L."/>
            <person name="Wheeler P.R."/>
            <person name="Parkhill J."/>
            <person name="Barrell B.G."/>
            <person name="Cole S.T."/>
            <person name="Gordon S.V."/>
            <person name="Hewinson R.G."/>
        </authorList>
    </citation>
    <scope>NUCLEOTIDE SEQUENCE [LARGE SCALE GENOMIC DNA]</scope>
    <source>
        <strain>ATCC BAA-935 / AF2122/97</strain>
    </source>
</reference>
<reference key="3">
    <citation type="journal article" date="2017" name="Genome Announc.">
        <title>Updated reference genome sequence and annotation of Mycobacterium bovis AF2122/97.</title>
        <authorList>
            <person name="Malone K.M."/>
            <person name="Farrell D."/>
            <person name="Stuber T.P."/>
            <person name="Schubert O.T."/>
            <person name="Aebersold R."/>
            <person name="Robbe-Austerman S."/>
            <person name="Gordon S.V."/>
        </authorList>
    </citation>
    <scope>NUCLEOTIDE SEQUENCE [LARGE SCALE GENOMIC DNA]</scope>
    <scope>GENOME REANNOTATION</scope>
    <source>
        <strain>ATCC BAA-935 / AF2122/97</strain>
    </source>
</reference>
<reference key="4">
    <citation type="journal article" date="2004" name="J. Biol. Chem.">
        <title>Adenylylation and catalytic properties of Mycobacterium tuberculosis glutamine synthetase expressed in Escherichia coli versus mycobacteria.</title>
        <authorList>
            <person name="Mehta R."/>
            <person name="Pearson J.T."/>
            <person name="Mahajan S."/>
            <person name="Nath A."/>
            <person name="Hickey M.J."/>
            <person name="Sherman D.R."/>
            <person name="Atkins W.M."/>
        </authorList>
    </citation>
    <scope>ACTIVITY REGULATION</scope>
    <source>
        <strain>ATCC 27294 / H37Rv</strain>
    </source>
</reference>
<reference key="5">
    <citation type="journal article" date="2013" name="BMC Microbiol.">
        <title>Poly-L-glutamate/glutamine synthesis in the cell wall of Mycobacterium bovis is regulated in response to nitrogen availability.</title>
        <authorList>
            <person name="Tripathi D."/>
            <person name="Chandra H."/>
            <person name="Bhatnagar R."/>
        </authorList>
    </citation>
    <scope>FUNCTION</scope>
    <scope>CATALYTIC ACTIVITY</scope>
</reference>
<feature type="chain" id="PRO_0000153244" description="Glutamine synthetase">
    <location>
        <begin position="1"/>
        <end position="478"/>
    </location>
</feature>
<feature type="domain" description="GS beta-grasp" evidence="5">
    <location>
        <begin position="16"/>
        <end position="100"/>
    </location>
</feature>
<feature type="domain" description="GS catalytic" evidence="6">
    <location>
        <begin position="108"/>
        <end position="478"/>
    </location>
</feature>
<feature type="binding site" evidence="4">
    <location>
        <position position="133"/>
    </location>
    <ligand>
        <name>Mg(2+)</name>
        <dbReference type="ChEBI" id="CHEBI:18420"/>
        <label>1</label>
    </ligand>
</feature>
<feature type="binding site" evidence="4">
    <location>
        <position position="135"/>
    </location>
    <ligand>
        <name>Mg(2+)</name>
        <dbReference type="ChEBI" id="CHEBI:18420"/>
        <label>2</label>
    </ligand>
</feature>
<feature type="binding site" evidence="4">
    <location>
        <position position="214"/>
    </location>
    <ligand>
        <name>ATP</name>
        <dbReference type="ChEBI" id="CHEBI:30616"/>
    </ligand>
</feature>
<feature type="binding site" evidence="4">
    <location>
        <position position="219"/>
    </location>
    <ligand>
        <name>Mg(2+)</name>
        <dbReference type="ChEBI" id="CHEBI:18420"/>
        <label>2</label>
    </ligand>
</feature>
<feature type="binding site" evidence="4">
    <location>
        <position position="227"/>
    </location>
    <ligand>
        <name>Mg(2+)</name>
        <dbReference type="ChEBI" id="CHEBI:18420"/>
        <label>2</label>
    </ligand>
</feature>
<feature type="binding site" evidence="4">
    <location>
        <begin position="230"/>
        <end position="232"/>
    </location>
    <ligand>
        <name>ATP</name>
        <dbReference type="ChEBI" id="CHEBI:30616"/>
    </ligand>
</feature>
<feature type="binding site" evidence="4">
    <location>
        <begin position="271"/>
        <end position="272"/>
    </location>
    <ligand>
        <name>L-glutamate</name>
        <dbReference type="ChEBI" id="CHEBI:29985"/>
    </ligand>
</feature>
<feature type="binding site" evidence="2">
    <location>
        <position position="272"/>
    </location>
    <ligand>
        <name>L-glutamate</name>
        <dbReference type="ChEBI" id="CHEBI:29985"/>
    </ligand>
</feature>
<feature type="binding site" evidence="4">
    <location>
        <position position="276"/>
    </location>
    <ligand>
        <name>Mg(2+)</name>
        <dbReference type="ChEBI" id="CHEBI:18420"/>
        <label>1</label>
    </ligand>
</feature>
<feature type="binding site" evidence="4">
    <location>
        <begin position="278"/>
        <end position="280"/>
    </location>
    <ligand>
        <name>ATP</name>
        <dbReference type="ChEBI" id="CHEBI:30616"/>
    </ligand>
</feature>
<feature type="binding site" evidence="3">
    <location>
        <position position="280"/>
    </location>
    <ligand>
        <name>ATP</name>
        <dbReference type="ChEBI" id="CHEBI:30616"/>
    </ligand>
</feature>
<feature type="binding site" evidence="4">
    <location>
        <position position="329"/>
    </location>
    <ligand>
        <name>L-glutamate</name>
        <dbReference type="ChEBI" id="CHEBI:29985"/>
    </ligand>
</feature>
<feature type="binding site" evidence="1">
    <location>
        <position position="335"/>
    </location>
    <ligand>
        <name>L-glutamate</name>
        <dbReference type="ChEBI" id="CHEBI:29985"/>
    </ligand>
</feature>
<feature type="binding site" evidence="4">
    <location>
        <position position="347"/>
    </location>
    <ligand>
        <name>ATP</name>
        <dbReference type="ChEBI" id="CHEBI:30616"/>
    </ligand>
</feature>
<feature type="binding site" evidence="4">
    <location>
        <position position="347"/>
    </location>
    <ligand>
        <name>L-glutamate</name>
        <dbReference type="ChEBI" id="CHEBI:29985"/>
    </ligand>
</feature>
<feature type="binding site" evidence="4">
    <location>
        <position position="352"/>
    </location>
    <ligand>
        <name>ATP</name>
        <dbReference type="ChEBI" id="CHEBI:30616"/>
    </ligand>
</feature>
<feature type="binding site" evidence="3">
    <location>
        <position position="361"/>
    </location>
    <ligand>
        <name>ATP</name>
        <dbReference type="ChEBI" id="CHEBI:30616"/>
    </ligand>
</feature>
<feature type="binding site" evidence="4">
    <location>
        <position position="366"/>
    </location>
    <ligand>
        <name>Mg(2+)</name>
        <dbReference type="ChEBI" id="CHEBI:18420"/>
        <label>1</label>
    </ligand>
</feature>
<feature type="binding site" evidence="4">
    <location>
        <position position="368"/>
    </location>
    <ligand>
        <name>L-glutamate</name>
        <dbReference type="ChEBI" id="CHEBI:29985"/>
    </ligand>
</feature>
<feature type="modified residue" description="O-AMP-tyrosine" evidence="4">
    <location>
        <position position="406"/>
    </location>
</feature>
<name>GLN1B_MYCBO</name>
<accession>P0A591</accession>
<accession>A0A1R3Y0L0</accession>
<accession>Q10377</accession>
<accession>X2BKH2</accession>
<gene>
    <name evidence="9" type="primary">glnA1</name>
    <name type="synonym">glnA</name>
    <name type="ordered locus">BQ2027_MB2244</name>
</gene>
<keyword id="KW-0067">ATP-binding</keyword>
<keyword id="KW-0963">Cytoplasm</keyword>
<keyword id="KW-0436">Ligase</keyword>
<keyword id="KW-0460">Magnesium</keyword>
<keyword id="KW-0479">Metal-binding</keyword>
<keyword id="KW-0547">Nucleotide-binding</keyword>
<keyword id="KW-0597">Phosphoprotein</keyword>
<keyword id="KW-1185">Reference proteome</keyword>
<keyword id="KW-0843">Virulence</keyword>
<protein>
    <recommendedName>
        <fullName evidence="9">Glutamine synthetase</fullName>
        <shortName evidence="9">GS</shortName>
        <ecNumber evidence="11">6.3.1.2</ecNumber>
    </recommendedName>
    <alternativeName>
        <fullName evidence="4">Glutamate--ammonia ligase</fullName>
    </alternativeName>
    <alternativeName>
        <fullName evidence="4">Glutamine synthetase I beta</fullName>
        <shortName evidence="4">GSI beta</shortName>
    </alternativeName>
</protein>
<sequence>MTEKTPDDVFKLAKDEKVEYVDVRFCDLPGIMQHFTIPASAFDKSVFDDGLAFDGSSIRGFQSIHESDMLLLPDPETARIDPFRAAKTLNINFFVHDPFTLEPYSRDPRNIARKAENYLISTGIADTAYFGAEAEFYIFDSVSFDSRANGSFYEVDAISGWWNTGAATEADGSPNRGYKVRHKGGYFPVAPNDQYVDLRDKMLTNLINSGFILEKGHHEVGSGGQAEINYQFNSLLHAADDMQLYKYIIKNTAWQNGKTVTFMPKPLFGDNGSGMHCHQSLWKDGAPLMYDETGYAGLSDTARHYIGGLLHHAPSLLAFTNPTVNSYKRLVPGYEAPINLVYSQRNRSACVRIPITGSNPKAKRLEFRSPDSSGNPYLAFSAMLMAGLDGIKNKIEPQAPVDKDLYELPPEEAASIPQTPTQLSDVIDRLEADHEYLTEGGVFTNDLIETWISFKRENEIEPVNIRPHPYEFALYYDV</sequence>
<comment type="function">
    <text evidence="4 8">Involved in nitrogen metabolism via ammonium assimilation (PubMed:24112767). Catalyzes the ATP-dependent biosynthesis of glutamine from glutamate and ammonia (PubMed:24112767). Also plays a key role in controlling the ammonia levels within infected host cells and so contributes to the pathogens capacity to inhibit phagosome acidification and phagosome-lysosome fusion (By similarity). Involved in cell wall biosynthesis via the production of the major component poly-L-glutamine (PLG) (PubMed:24112767). PLG synthesis in the cell wall occurs only in nitrogen limiting conditions and on the contrary high nitrogen conditions inhibit PLG synthesis (PubMed:24112767).</text>
</comment>
<comment type="catalytic activity">
    <reaction evidence="11">
        <text>L-glutamate + NH4(+) + ATP = L-glutamine + ADP + phosphate + H(+)</text>
        <dbReference type="Rhea" id="RHEA:16169"/>
        <dbReference type="ChEBI" id="CHEBI:15378"/>
        <dbReference type="ChEBI" id="CHEBI:28938"/>
        <dbReference type="ChEBI" id="CHEBI:29985"/>
        <dbReference type="ChEBI" id="CHEBI:30616"/>
        <dbReference type="ChEBI" id="CHEBI:43474"/>
        <dbReference type="ChEBI" id="CHEBI:58359"/>
        <dbReference type="ChEBI" id="CHEBI:456216"/>
        <dbReference type="EC" id="6.3.1.2"/>
    </reaction>
</comment>
<comment type="cofactor">
    <cofactor evidence="4">
        <name>Mg(2+)</name>
        <dbReference type="ChEBI" id="CHEBI:18420"/>
    </cofactor>
    <text evidence="4">Binds 2 Mg(2+) ions per subunit.</text>
</comment>
<comment type="activity regulation">
    <text evidence="7">When cellular nitrogen levels are high, the C-terminal adenylyl transferase (AT) of GlnE inhibits GlnA by covalent transfer of an adenylyl group from ATP to Tyr-406 (PubMed:15037612). Conversely, when nitrogen levels are low, the N-terminal adenylyl removase (AR) of GlnE activates GlnA by removing the adenylyl group by phosphorolysis (PubMed:15037612). The fully adenylated enzyme complex is inactive (Probable).</text>
</comment>
<comment type="subunit">
    <text evidence="4">Oligomer of 12 subunits arranged in the form of two hexagons.</text>
</comment>
<comment type="subcellular location">
    <subcellularLocation>
        <location evidence="4">Cytoplasm</location>
    </subcellularLocation>
</comment>
<comment type="similarity">
    <text evidence="10">Belongs to the glutamine synthetase family.</text>
</comment>